<keyword id="KW-0067">ATP-binding</keyword>
<keyword id="KW-0520">NAD</keyword>
<keyword id="KW-0547">Nucleotide-binding</keyword>
<keyword id="KW-0548">Nucleotidyltransferase</keyword>
<keyword id="KW-0662">Pyridine nucleotide biosynthesis</keyword>
<keyword id="KW-0808">Transferase</keyword>
<name>NADD_MYCA1</name>
<feature type="chain" id="PRO_0000336709" description="Probable nicotinate-nucleotide adenylyltransferase">
    <location>
        <begin position="1"/>
        <end position="212"/>
    </location>
</feature>
<accession>A0QDI7</accession>
<gene>
    <name evidence="1" type="primary">nadD</name>
    <name type="ordered locus">MAV_1750</name>
</gene>
<organism>
    <name type="scientific">Mycobacterium avium (strain 104)</name>
    <dbReference type="NCBI Taxonomy" id="243243"/>
    <lineage>
        <taxon>Bacteria</taxon>
        <taxon>Bacillati</taxon>
        <taxon>Actinomycetota</taxon>
        <taxon>Actinomycetes</taxon>
        <taxon>Mycobacteriales</taxon>
        <taxon>Mycobacteriaceae</taxon>
        <taxon>Mycobacterium</taxon>
        <taxon>Mycobacterium avium complex (MAC)</taxon>
    </lineage>
</organism>
<sequence length="212" mass="23455">MGGTFDPIHYGHLVAASEVADLFGLDQVVFVPSGQPWQKDRHVSAAEDRYLMTVIATASNPRFSVSRVDIDRAGPTYTRDTLRDLHALNPDSELFFITGADALASILSWQGWETLFELAHFVGVSRPGYELRREHITGVLGELPDDALTLVEIPALAISSTDCRQRAAHRRPLWYLMPDGVVQYVSKRRLYRAEPGPAVAVTETSLSTGDHP</sequence>
<dbReference type="EC" id="2.7.7.18" evidence="1"/>
<dbReference type="EMBL" id="CP000479">
    <property type="protein sequence ID" value="ABK65552.1"/>
    <property type="molecule type" value="Genomic_DNA"/>
</dbReference>
<dbReference type="RefSeq" id="WP_009976000.1">
    <property type="nucleotide sequence ID" value="NC_008595.1"/>
</dbReference>
<dbReference type="SMR" id="A0QDI7"/>
<dbReference type="KEGG" id="mav:MAV_1750"/>
<dbReference type="HOGENOM" id="CLU_069765_1_1_11"/>
<dbReference type="UniPathway" id="UPA00253">
    <property type="reaction ID" value="UER00332"/>
</dbReference>
<dbReference type="Proteomes" id="UP000001574">
    <property type="component" value="Chromosome"/>
</dbReference>
<dbReference type="GO" id="GO:0005524">
    <property type="term" value="F:ATP binding"/>
    <property type="evidence" value="ECO:0007669"/>
    <property type="project" value="UniProtKB-KW"/>
</dbReference>
<dbReference type="GO" id="GO:0004515">
    <property type="term" value="F:nicotinate-nucleotide adenylyltransferase activity"/>
    <property type="evidence" value="ECO:0007669"/>
    <property type="project" value="UniProtKB-UniRule"/>
</dbReference>
<dbReference type="GO" id="GO:0009435">
    <property type="term" value="P:NAD biosynthetic process"/>
    <property type="evidence" value="ECO:0007669"/>
    <property type="project" value="UniProtKB-UniRule"/>
</dbReference>
<dbReference type="CDD" id="cd02165">
    <property type="entry name" value="NMNAT"/>
    <property type="match status" value="1"/>
</dbReference>
<dbReference type="FunFam" id="3.40.50.620:FF:000039">
    <property type="entry name" value="Probable nicotinate-nucleotide adenylyltransferase"/>
    <property type="match status" value="1"/>
</dbReference>
<dbReference type="Gene3D" id="3.40.50.620">
    <property type="entry name" value="HUPs"/>
    <property type="match status" value="1"/>
</dbReference>
<dbReference type="HAMAP" id="MF_00244">
    <property type="entry name" value="NaMN_adenylyltr"/>
    <property type="match status" value="1"/>
</dbReference>
<dbReference type="InterPro" id="IPR004821">
    <property type="entry name" value="Cyt_trans-like"/>
</dbReference>
<dbReference type="InterPro" id="IPR005248">
    <property type="entry name" value="NadD/NMNAT"/>
</dbReference>
<dbReference type="InterPro" id="IPR014729">
    <property type="entry name" value="Rossmann-like_a/b/a_fold"/>
</dbReference>
<dbReference type="NCBIfam" id="TIGR00125">
    <property type="entry name" value="cyt_tran_rel"/>
    <property type="match status" value="1"/>
</dbReference>
<dbReference type="NCBIfam" id="TIGR00482">
    <property type="entry name" value="nicotinate (nicotinamide) nucleotide adenylyltransferase"/>
    <property type="match status" value="1"/>
</dbReference>
<dbReference type="NCBIfam" id="NF000840">
    <property type="entry name" value="PRK00071.1-3"/>
    <property type="match status" value="1"/>
</dbReference>
<dbReference type="PANTHER" id="PTHR39321">
    <property type="entry name" value="NICOTINATE-NUCLEOTIDE ADENYLYLTRANSFERASE-RELATED"/>
    <property type="match status" value="1"/>
</dbReference>
<dbReference type="PANTHER" id="PTHR39321:SF3">
    <property type="entry name" value="PHOSPHOPANTETHEINE ADENYLYLTRANSFERASE"/>
    <property type="match status" value="1"/>
</dbReference>
<dbReference type="Pfam" id="PF01467">
    <property type="entry name" value="CTP_transf_like"/>
    <property type="match status" value="1"/>
</dbReference>
<dbReference type="SUPFAM" id="SSF52374">
    <property type="entry name" value="Nucleotidylyl transferase"/>
    <property type="match status" value="1"/>
</dbReference>
<proteinExistence type="inferred from homology"/>
<comment type="function">
    <text evidence="1">Catalyzes the reversible adenylation of nicotinate mononucleotide (NaMN) to nicotinic acid adenine dinucleotide (NaAD).</text>
</comment>
<comment type="catalytic activity">
    <reaction evidence="1">
        <text>nicotinate beta-D-ribonucleotide + ATP + H(+) = deamido-NAD(+) + diphosphate</text>
        <dbReference type="Rhea" id="RHEA:22860"/>
        <dbReference type="ChEBI" id="CHEBI:15378"/>
        <dbReference type="ChEBI" id="CHEBI:30616"/>
        <dbReference type="ChEBI" id="CHEBI:33019"/>
        <dbReference type="ChEBI" id="CHEBI:57502"/>
        <dbReference type="ChEBI" id="CHEBI:58437"/>
        <dbReference type="EC" id="2.7.7.18"/>
    </reaction>
</comment>
<comment type="pathway">
    <text evidence="1">Cofactor biosynthesis; NAD(+) biosynthesis; deamido-NAD(+) from nicotinate D-ribonucleotide: step 1/1.</text>
</comment>
<comment type="similarity">
    <text evidence="1">Belongs to the NadD family.</text>
</comment>
<evidence type="ECO:0000255" key="1">
    <source>
        <dbReference type="HAMAP-Rule" id="MF_00244"/>
    </source>
</evidence>
<reference key="1">
    <citation type="submission" date="2006-10" db="EMBL/GenBank/DDBJ databases">
        <authorList>
            <person name="Fleischmann R.D."/>
            <person name="Dodson R.J."/>
            <person name="Haft D.H."/>
            <person name="Merkel J.S."/>
            <person name="Nelson W.C."/>
            <person name="Fraser C.M."/>
        </authorList>
    </citation>
    <scope>NUCLEOTIDE SEQUENCE [LARGE SCALE GENOMIC DNA]</scope>
    <source>
        <strain>104</strain>
    </source>
</reference>
<protein>
    <recommendedName>
        <fullName evidence="1">Probable nicotinate-nucleotide adenylyltransferase</fullName>
        <ecNumber evidence="1">2.7.7.18</ecNumber>
    </recommendedName>
    <alternativeName>
        <fullName evidence="1">Deamido-NAD(+) diphosphorylase</fullName>
    </alternativeName>
    <alternativeName>
        <fullName evidence="1">Deamido-NAD(+) pyrophosphorylase</fullName>
    </alternativeName>
    <alternativeName>
        <fullName evidence="1">Nicotinate mononucleotide adenylyltransferase</fullName>
        <shortName evidence="1">NaMN adenylyltransferase</shortName>
    </alternativeName>
</protein>